<reference key="1">
    <citation type="submission" date="2007-04" db="EMBL/GenBank/DDBJ databases">
        <title>Complete sequence of chromosome of Mycobacterium gilvum PYR-GCK.</title>
        <authorList>
            <consortium name="US DOE Joint Genome Institute"/>
            <person name="Copeland A."/>
            <person name="Lucas S."/>
            <person name="Lapidus A."/>
            <person name="Barry K."/>
            <person name="Detter J.C."/>
            <person name="Glavina del Rio T."/>
            <person name="Hammon N."/>
            <person name="Israni S."/>
            <person name="Dalin E."/>
            <person name="Tice H."/>
            <person name="Pitluck S."/>
            <person name="Chain P."/>
            <person name="Malfatti S."/>
            <person name="Shin M."/>
            <person name="Vergez L."/>
            <person name="Schmutz J."/>
            <person name="Larimer F."/>
            <person name="Land M."/>
            <person name="Hauser L."/>
            <person name="Kyrpides N."/>
            <person name="Mikhailova N."/>
            <person name="Miller C."/>
            <person name="Richardson P."/>
        </authorList>
    </citation>
    <scope>NUCLEOTIDE SEQUENCE [LARGE SCALE GENOMIC DNA]</scope>
    <source>
        <strain>PYR-GCK</strain>
    </source>
</reference>
<comment type="catalytic activity">
    <reaction evidence="1">
        <text>(R)-pantothenate + ATP = (R)-4'-phosphopantothenate + ADP + H(+)</text>
        <dbReference type="Rhea" id="RHEA:16373"/>
        <dbReference type="ChEBI" id="CHEBI:10986"/>
        <dbReference type="ChEBI" id="CHEBI:15378"/>
        <dbReference type="ChEBI" id="CHEBI:29032"/>
        <dbReference type="ChEBI" id="CHEBI:30616"/>
        <dbReference type="ChEBI" id="CHEBI:456216"/>
        <dbReference type="EC" id="2.7.1.33"/>
    </reaction>
</comment>
<comment type="pathway">
    <text evidence="1">Cofactor biosynthesis; coenzyme A biosynthesis; CoA from (R)-pantothenate: step 1/5.</text>
</comment>
<comment type="subcellular location">
    <subcellularLocation>
        <location evidence="1">Cytoplasm</location>
    </subcellularLocation>
</comment>
<comment type="similarity">
    <text evidence="1">Belongs to the prokaryotic pantothenate kinase family.</text>
</comment>
<protein>
    <recommendedName>
        <fullName evidence="1">Pantothenate kinase</fullName>
        <ecNumber evidence="1">2.7.1.33</ecNumber>
    </recommendedName>
    <alternativeName>
        <fullName evidence="1">Pantothenic acid kinase</fullName>
    </alternativeName>
</protein>
<sequence>MARLSEPSPYVEFDRAQWRALRMSTPLKLTEDELVRLRGIGEKIDLLEVEEVYLPLARLIHLQVAARQALFATTADFLGEPQQNPDRPVPFVIGVAGSVAVGKSTTARVLQALLARWEHHPRVDLVTTDGFLYSNSELSRRNLMHRKGFPESYDRRGLMRFVTTVKSGSDVACAPVYSHLLYDIVPGEKQIIEHPDILILEGLNVLQTGPALMVSDLFDFSVYVDARIEDIENWYISRFLKMREGAFADPASHFHHYSTLTDEQAVFAARDIWHSINRPNLIENILPTRPRATLVLRKDSDHSINRLRLRKL</sequence>
<dbReference type="EC" id="2.7.1.33" evidence="1"/>
<dbReference type="EMBL" id="CP000656">
    <property type="protein sequence ID" value="ABP44536.1"/>
    <property type="molecule type" value="Genomic_DNA"/>
</dbReference>
<dbReference type="SMR" id="A4T9A9"/>
<dbReference type="STRING" id="350054.Mflv_2058"/>
<dbReference type="KEGG" id="mgi:Mflv_2058"/>
<dbReference type="eggNOG" id="COG0572">
    <property type="taxonomic scope" value="Bacteria"/>
</dbReference>
<dbReference type="HOGENOM" id="CLU_053818_1_1_11"/>
<dbReference type="OrthoDB" id="1550976at2"/>
<dbReference type="UniPathway" id="UPA00241">
    <property type="reaction ID" value="UER00352"/>
</dbReference>
<dbReference type="GO" id="GO:0005737">
    <property type="term" value="C:cytoplasm"/>
    <property type="evidence" value="ECO:0007669"/>
    <property type="project" value="UniProtKB-SubCell"/>
</dbReference>
<dbReference type="GO" id="GO:0005524">
    <property type="term" value="F:ATP binding"/>
    <property type="evidence" value="ECO:0007669"/>
    <property type="project" value="UniProtKB-UniRule"/>
</dbReference>
<dbReference type="GO" id="GO:0004594">
    <property type="term" value="F:pantothenate kinase activity"/>
    <property type="evidence" value="ECO:0007669"/>
    <property type="project" value="UniProtKB-UniRule"/>
</dbReference>
<dbReference type="GO" id="GO:0015937">
    <property type="term" value="P:coenzyme A biosynthetic process"/>
    <property type="evidence" value="ECO:0007669"/>
    <property type="project" value="UniProtKB-UniRule"/>
</dbReference>
<dbReference type="CDD" id="cd02025">
    <property type="entry name" value="PanK"/>
    <property type="match status" value="1"/>
</dbReference>
<dbReference type="FunFam" id="3.40.50.300:FF:000242">
    <property type="entry name" value="Pantothenate kinase"/>
    <property type="match status" value="1"/>
</dbReference>
<dbReference type="Gene3D" id="3.40.50.300">
    <property type="entry name" value="P-loop containing nucleotide triphosphate hydrolases"/>
    <property type="match status" value="1"/>
</dbReference>
<dbReference type="HAMAP" id="MF_00215">
    <property type="entry name" value="Pantothen_kinase_1"/>
    <property type="match status" value="1"/>
</dbReference>
<dbReference type="InterPro" id="IPR027417">
    <property type="entry name" value="P-loop_NTPase"/>
</dbReference>
<dbReference type="InterPro" id="IPR004566">
    <property type="entry name" value="PanK"/>
</dbReference>
<dbReference type="InterPro" id="IPR006083">
    <property type="entry name" value="PRK/URK"/>
</dbReference>
<dbReference type="NCBIfam" id="TIGR00554">
    <property type="entry name" value="panK_bact"/>
    <property type="match status" value="1"/>
</dbReference>
<dbReference type="PANTHER" id="PTHR10285">
    <property type="entry name" value="URIDINE KINASE"/>
    <property type="match status" value="1"/>
</dbReference>
<dbReference type="Pfam" id="PF00485">
    <property type="entry name" value="PRK"/>
    <property type="match status" value="1"/>
</dbReference>
<dbReference type="PIRSF" id="PIRSF000545">
    <property type="entry name" value="Pantothenate_kin"/>
    <property type="match status" value="1"/>
</dbReference>
<dbReference type="SUPFAM" id="SSF52540">
    <property type="entry name" value="P-loop containing nucleoside triphosphate hydrolases"/>
    <property type="match status" value="1"/>
</dbReference>
<evidence type="ECO:0000255" key="1">
    <source>
        <dbReference type="HAMAP-Rule" id="MF_00215"/>
    </source>
</evidence>
<organism>
    <name type="scientific">Mycolicibacterium gilvum (strain PYR-GCK)</name>
    <name type="common">Mycobacterium gilvum (strain PYR-GCK)</name>
    <dbReference type="NCBI Taxonomy" id="350054"/>
    <lineage>
        <taxon>Bacteria</taxon>
        <taxon>Bacillati</taxon>
        <taxon>Actinomycetota</taxon>
        <taxon>Actinomycetes</taxon>
        <taxon>Mycobacteriales</taxon>
        <taxon>Mycobacteriaceae</taxon>
        <taxon>Mycolicibacterium</taxon>
    </lineage>
</organism>
<name>COAA_MYCGI</name>
<gene>
    <name evidence="1" type="primary">coaA</name>
    <name type="ordered locus">Mflv_2058</name>
</gene>
<proteinExistence type="inferred from homology"/>
<keyword id="KW-0067">ATP-binding</keyword>
<keyword id="KW-0173">Coenzyme A biosynthesis</keyword>
<keyword id="KW-0963">Cytoplasm</keyword>
<keyword id="KW-0418">Kinase</keyword>
<keyword id="KW-0547">Nucleotide-binding</keyword>
<keyword id="KW-0808">Transferase</keyword>
<feature type="chain" id="PRO_1000078058" description="Pantothenate kinase">
    <location>
        <begin position="1"/>
        <end position="312"/>
    </location>
</feature>
<feature type="binding site" evidence="1">
    <location>
        <begin position="97"/>
        <end position="104"/>
    </location>
    <ligand>
        <name>ATP</name>
        <dbReference type="ChEBI" id="CHEBI:30616"/>
    </ligand>
</feature>
<accession>A4T9A9</accession>